<proteinExistence type="predicted"/>
<accession>Q8XDT5</accession>
<accession>Q7ADB1</accession>
<dbReference type="EMBL" id="AE005174">
    <property type="protein sequence ID" value="AAG56777.1"/>
    <property type="status" value="ALT_INIT"/>
    <property type="molecule type" value="Genomic_DNA"/>
</dbReference>
<dbReference type="EMBL" id="BA000007">
    <property type="protein sequence ID" value="BAB35920.1"/>
    <property type="status" value="ALT_INIT"/>
    <property type="molecule type" value="Genomic_DNA"/>
</dbReference>
<dbReference type="PIR" id="A99941">
    <property type="entry name" value="A99941"/>
</dbReference>
<dbReference type="PIR" id="E85789">
    <property type="entry name" value="E85789"/>
</dbReference>
<dbReference type="RefSeq" id="NP_310524.1">
    <property type="nucleotide sequence ID" value="NC_002695.1"/>
</dbReference>
<dbReference type="RefSeq" id="WP_000999630.1">
    <property type="nucleotide sequence ID" value="NZ_VOAI01000010.1"/>
</dbReference>
<dbReference type="SMR" id="Q8XDT5"/>
<dbReference type="STRING" id="155864.Z2828"/>
<dbReference type="GeneID" id="93776034"/>
<dbReference type="KEGG" id="ece:Z2828"/>
<dbReference type="PATRIC" id="fig|386585.9.peg.2614"/>
<dbReference type="eggNOG" id="ENOG5033P0D">
    <property type="taxonomic scope" value="Bacteria"/>
</dbReference>
<dbReference type="HOGENOM" id="CLU_216793_1_0_6"/>
<dbReference type="Proteomes" id="UP000000558">
    <property type="component" value="Chromosome"/>
</dbReference>
<dbReference type="Proteomes" id="UP000002519">
    <property type="component" value="Chromosome"/>
</dbReference>
<dbReference type="GO" id="GO:0016020">
    <property type="term" value="C:membrane"/>
    <property type="evidence" value="ECO:0007669"/>
    <property type="project" value="UniProtKB-SubCell"/>
</dbReference>
<dbReference type="InterPro" id="IPR048191">
    <property type="entry name" value="YoaI-like"/>
</dbReference>
<dbReference type="NCBIfam" id="NF041475">
    <property type="entry name" value="membrane_YoaI"/>
    <property type="match status" value="1"/>
</dbReference>
<protein>
    <recommendedName>
        <fullName>Uncharacterized protein YoaI</fullName>
    </recommendedName>
</protein>
<comment type="subcellular location">
    <subcellularLocation>
        <location evidence="2">Membrane</location>
        <topology evidence="2">Single-pass membrane protein</topology>
    </subcellularLocation>
</comment>
<comment type="sequence caution" evidence="2">
    <conflict type="erroneous initiation">
        <sequence resource="EMBL-CDS" id="AAG56777"/>
    </conflict>
</comment>
<comment type="sequence caution" evidence="2">
    <conflict type="erroneous initiation">
        <sequence resource="EMBL-CDS" id="BAB35920"/>
    </conflict>
</comment>
<organism>
    <name type="scientific">Escherichia coli O157:H7</name>
    <dbReference type="NCBI Taxonomy" id="83334"/>
    <lineage>
        <taxon>Bacteria</taxon>
        <taxon>Pseudomonadati</taxon>
        <taxon>Pseudomonadota</taxon>
        <taxon>Gammaproteobacteria</taxon>
        <taxon>Enterobacterales</taxon>
        <taxon>Enterobacteriaceae</taxon>
        <taxon>Escherichia</taxon>
    </lineage>
</organism>
<name>YOAI_ECO57</name>
<keyword id="KW-0472">Membrane</keyword>
<keyword id="KW-1185">Reference proteome</keyword>
<keyword id="KW-0812">Transmembrane</keyword>
<keyword id="KW-1133">Transmembrane helix</keyword>
<sequence>MNDQMFVETLIITSSFFAIAVVLVLSVLLIERTG</sequence>
<reference key="1">
    <citation type="journal article" date="2001" name="Nature">
        <title>Genome sequence of enterohaemorrhagic Escherichia coli O157:H7.</title>
        <authorList>
            <person name="Perna N.T."/>
            <person name="Plunkett G. III"/>
            <person name="Burland V."/>
            <person name="Mau B."/>
            <person name="Glasner J.D."/>
            <person name="Rose D.J."/>
            <person name="Mayhew G.F."/>
            <person name="Evans P.S."/>
            <person name="Gregor J."/>
            <person name="Kirkpatrick H.A."/>
            <person name="Posfai G."/>
            <person name="Hackett J."/>
            <person name="Klink S."/>
            <person name="Boutin A."/>
            <person name="Shao Y."/>
            <person name="Miller L."/>
            <person name="Grotbeck E.J."/>
            <person name="Davis N.W."/>
            <person name="Lim A."/>
            <person name="Dimalanta E.T."/>
            <person name="Potamousis K."/>
            <person name="Apodaca J."/>
            <person name="Anantharaman T.S."/>
            <person name="Lin J."/>
            <person name="Yen G."/>
            <person name="Schwartz D.C."/>
            <person name="Welch R.A."/>
            <person name="Blattner F.R."/>
        </authorList>
    </citation>
    <scope>NUCLEOTIDE SEQUENCE [LARGE SCALE GENOMIC DNA]</scope>
    <source>
        <strain>O157:H7 / EDL933 / ATCC 700927 / EHEC</strain>
    </source>
</reference>
<reference key="2">
    <citation type="journal article" date="2001" name="DNA Res.">
        <title>Complete genome sequence of enterohemorrhagic Escherichia coli O157:H7 and genomic comparison with a laboratory strain K-12.</title>
        <authorList>
            <person name="Hayashi T."/>
            <person name="Makino K."/>
            <person name="Ohnishi M."/>
            <person name="Kurokawa K."/>
            <person name="Ishii K."/>
            <person name="Yokoyama K."/>
            <person name="Han C.-G."/>
            <person name="Ohtsubo E."/>
            <person name="Nakayama K."/>
            <person name="Murata T."/>
            <person name="Tanaka M."/>
            <person name="Tobe T."/>
            <person name="Iida T."/>
            <person name="Takami H."/>
            <person name="Honda T."/>
            <person name="Sasakawa C."/>
            <person name="Ogasawara N."/>
            <person name="Yasunaga T."/>
            <person name="Kuhara S."/>
            <person name="Shiba T."/>
            <person name="Hattori M."/>
            <person name="Shinagawa H."/>
        </authorList>
    </citation>
    <scope>NUCLEOTIDE SEQUENCE [LARGE SCALE GENOMIC DNA]</scope>
    <source>
        <strain>O157:H7 / Sakai / RIMD 0509952 / EHEC</strain>
    </source>
</reference>
<gene>
    <name type="primary">yoaI</name>
    <name type="ordered locus">Z2828</name>
    <name type="ordered locus">ECs2497</name>
</gene>
<evidence type="ECO:0000255" key="1"/>
<evidence type="ECO:0000305" key="2"/>
<feature type="chain" id="PRO_0000248924" description="Uncharacterized protein YoaI">
    <location>
        <begin position="1"/>
        <end position="34"/>
    </location>
</feature>
<feature type="transmembrane region" description="Helical" evidence="1">
    <location>
        <begin position="10"/>
        <end position="30"/>
    </location>
</feature>